<organism>
    <name type="scientific">Borreliella burgdorferi (strain ATCC 35210 / DSM 4680 / CIP 102532 / B31)</name>
    <name type="common">Borrelia burgdorferi</name>
    <dbReference type="NCBI Taxonomy" id="224326"/>
    <lineage>
        <taxon>Bacteria</taxon>
        <taxon>Pseudomonadati</taxon>
        <taxon>Spirochaetota</taxon>
        <taxon>Spirochaetia</taxon>
        <taxon>Spirochaetales</taxon>
        <taxon>Borreliaceae</taxon>
        <taxon>Borreliella</taxon>
    </lineage>
</organism>
<sequence length="417" mass="45881">MRDDQIFNLIEKEKLREREHIELIASENFTSLEIRQAVGSILTNKYAEGYPLNRYYGGCSFIDEIETLAISRAKELFGAKYANVQPHSGSQANMAAIMALISPGDRILGMQLSHGGHLTHGSRVNFSGIFFNTYFYGVSRDSELIDYDEVLKIAKDCRPNLIIAGASSYSREIDFKKFREIADDVSAYLLCDIAHIAGLIVAGFHNSSIDVAHLTTSTTHKTLRGPRGGIILSGKDFDKLVNFNGKEKPLFNAVNSTVFPGTQGGPLVHVIAGKAIAFKEALQESFKEYIANVIKNTKVMAEYFKSEGFRIVSGGTDNHLFLVDLSSSDLTGADAEKLLESVNITLNKNAIPFDKKSPSLASGIRIGGAAITSRGLNESDSLNVAKFIVRALKAKSDIELKQIKKEVVRFIRDFDMP</sequence>
<dbReference type="EC" id="2.1.2.1" evidence="1"/>
<dbReference type="EMBL" id="AE000783">
    <property type="protein sequence ID" value="AAC66951.1"/>
    <property type="molecule type" value="Genomic_DNA"/>
</dbReference>
<dbReference type="PIR" id="H70174">
    <property type="entry name" value="H70174"/>
</dbReference>
<dbReference type="RefSeq" id="NP_212735.1">
    <property type="nucleotide sequence ID" value="NC_001318.1"/>
</dbReference>
<dbReference type="RefSeq" id="WP_002656965.1">
    <property type="nucleotide sequence ID" value="NC_001318.1"/>
</dbReference>
<dbReference type="SMR" id="O51547"/>
<dbReference type="STRING" id="224326.BB_0601"/>
<dbReference type="PaxDb" id="224326-BB_0601"/>
<dbReference type="EnsemblBacteria" id="AAC66951">
    <property type="protein sequence ID" value="AAC66951"/>
    <property type="gene ID" value="BB_0601"/>
</dbReference>
<dbReference type="GeneID" id="56568034"/>
<dbReference type="KEGG" id="bbu:BB_0601"/>
<dbReference type="PATRIC" id="fig|224326.49.peg.992"/>
<dbReference type="HOGENOM" id="CLU_022477_2_1_12"/>
<dbReference type="OrthoDB" id="9803846at2"/>
<dbReference type="UniPathway" id="UPA00193"/>
<dbReference type="UniPathway" id="UPA00288">
    <property type="reaction ID" value="UER01023"/>
</dbReference>
<dbReference type="Proteomes" id="UP000001807">
    <property type="component" value="Chromosome"/>
</dbReference>
<dbReference type="GO" id="GO:0005829">
    <property type="term" value="C:cytosol"/>
    <property type="evidence" value="ECO:0000314"/>
    <property type="project" value="CAFA"/>
</dbReference>
<dbReference type="GO" id="GO:0004372">
    <property type="term" value="F:glycine hydroxymethyltransferase activity"/>
    <property type="evidence" value="ECO:0007669"/>
    <property type="project" value="UniProtKB-UniRule"/>
</dbReference>
<dbReference type="GO" id="GO:0030170">
    <property type="term" value="F:pyridoxal phosphate binding"/>
    <property type="evidence" value="ECO:0007669"/>
    <property type="project" value="UniProtKB-UniRule"/>
</dbReference>
<dbReference type="GO" id="GO:0019264">
    <property type="term" value="P:glycine biosynthetic process from serine"/>
    <property type="evidence" value="ECO:0007669"/>
    <property type="project" value="UniProtKB-UniRule"/>
</dbReference>
<dbReference type="GO" id="GO:0035999">
    <property type="term" value="P:tetrahydrofolate interconversion"/>
    <property type="evidence" value="ECO:0007669"/>
    <property type="project" value="UniProtKB-UniRule"/>
</dbReference>
<dbReference type="CDD" id="cd00378">
    <property type="entry name" value="SHMT"/>
    <property type="match status" value="1"/>
</dbReference>
<dbReference type="FunFam" id="3.40.640.10:FF:000001">
    <property type="entry name" value="Serine hydroxymethyltransferase"/>
    <property type="match status" value="1"/>
</dbReference>
<dbReference type="Gene3D" id="3.90.1150.10">
    <property type="entry name" value="Aspartate Aminotransferase, domain 1"/>
    <property type="match status" value="1"/>
</dbReference>
<dbReference type="Gene3D" id="3.40.640.10">
    <property type="entry name" value="Type I PLP-dependent aspartate aminotransferase-like (Major domain)"/>
    <property type="match status" value="1"/>
</dbReference>
<dbReference type="HAMAP" id="MF_00051">
    <property type="entry name" value="SHMT"/>
    <property type="match status" value="1"/>
</dbReference>
<dbReference type="InterPro" id="IPR015424">
    <property type="entry name" value="PyrdxlP-dep_Trfase"/>
</dbReference>
<dbReference type="InterPro" id="IPR015421">
    <property type="entry name" value="PyrdxlP-dep_Trfase_major"/>
</dbReference>
<dbReference type="InterPro" id="IPR015422">
    <property type="entry name" value="PyrdxlP-dep_Trfase_small"/>
</dbReference>
<dbReference type="InterPro" id="IPR001085">
    <property type="entry name" value="Ser_HO-MeTrfase"/>
</dbReference>
<dbReference type="InterPro" id="IPR049943">
    <property type="entry name" value="Ser_HO-MeTrfase-like"/>
</dbReference>
<dbReference type="InterPro" id="IPR019798">
    <property type="entry name" value="Ser_HO-MeTrfase_PLP_BS"/>
</dbReference>
<dbReference type="InterPro" id="IPR039429">
    <property type="entry name" value="SHMT-like_dom"/>
</dbReference>
<dbReference type="NCBIfam" id="NF000586">
    <property type="entry name" value="PRK00011.1"/>
    <property type="match status" value="1"/>
</dbReference>
<dbReference type="PANTHER" id="PTHR11680">
    <property type="entry name" value="SERINE HYDROXYMETHYLTRANSFERASE"/>
    <property type="match status" value="1"/>
</dbReference>
<dbReference type="PANTHER" id="PTHR11680:SF35">
    <property type="entry name" value="SERINE HYDROXYMETHYLTRANSFERASE 1"/>
    <property type="match status" value="1"/>
</dbReference>
<dbReference type="Pfam" id="PF00464">
    <property type="entry name" value="SHMT"/>
    <property type="match status" value="1"/>
</dbReference>
<dbReference type="PIRSF" id="PIRSF000412">
    <property type="entry name" value="SHMT"/>
    <property type="match status" value="1"/>
</dbReference>
<dbReference type="SUPFAM" id="SSF53383">
    <property type="entry name" value="PLP-dependent transferases"/>
    <property type="match status" value="1"/>
</dbReference>
<dbReference type="PROSITE" id="PS00096">
    <property type="entry name" value="SHMT"/>
    <property type="match status" value="1"/>
</dbReference>
<evidence type="ECO:0000255" key="1">
    <source>
        <dbReference type="HAMAP-Rule" id="MF_00051"/>
    </source>
</evidence>
<gene>
    <name evidence="1" type="primary">glyA</name>
    <name type="ordered locus">BB_0601</name>
</gene>
<feature type="chain" id="PRO_0000113539" description="Serine hydroxymethyltransferase">
    <location>
        <begin position="1"/>
        <end position="417"/>
    </location>
</feature>
<feature type="binding site" evidence="1">
    <location>
        <position position="112"/>
    </location>
    <ligand>
        <name>(6S)-5,6,7,8-tetrahydrofolate</name>
        <dbReference type="ChEBI" id="CHEBI:57453"/>
    </ligand>
</feature>
<feature type="binding site" evidence="1">
    <location>
        <begin position="116"/>
        <end position="118"/>
    </location>
    <ligand>
        <name>(6S)-5,6,7,8-tetrahydrofolate</name>
        <dbReference type="ChEBI" id="CHEBI:57453"/>
    </ligand>
</feature>
<feature type="binding site" evidence="1">
    <location>
        <position position="247"/>
    </location>
    <ligand>
        <name>(6S)-5,6,7,8-tetrahydrofolate</name>
        <dbReference type="ChEBI" id="CHEBI:57453"/>
    </ligand>
</feature>
<feature type="site" description="Plays an important role in substrate specificity" evidence="1">
    <location>
        <position position="220"/>
    </location>
</feature>
<feature type="modified residue" description="N6-(pyridoxal phosphate)lysine" evidence="1">
    <location>
        <position position="221"/>
    </location>
</feature>
<protein>
    <recommendedName>
        <fullName evidence="1">Serine hydroxymethyltransferase</fullName>
        <shortName evidence="1">SHMT</shortName>
        <shortName evidence="1">Serine methylase</shortName>
        <ecNumber evidence="1">2.1.2.1</ecNumber>
    </recommendedName>
</protein>
<accession>O51547</accession>
<comment type="function">
    <text evidence="1">Catalyzes the reversible interconversion of serine and glycine with tetrahydrofolate (THF) serving as the one-carbon carrier. This reaction serves as the major source of one-carbon groups required for the biosynthesis of purines, thymidylate, methionine, and other important biomolecules. Also exhibits THF-independent aldolase activity toward beta-hydroxyamino acids, producing glycine and aldehydes, via a retro-aldol mechanism.</text>
</comment>
<comment type="catalytic activity">
    <reaction evidence="1">
        <text>(6R)-5,10-methylene-5,6,7,8-tetrahydrofolate + glycine + H2O = (6S)-5,6,7,8-tetrahydrofolate + L-serine</text>
        <dbReference type="Rhea" id="RHEA:15481"/>
        <dbReference type="ChEBI" id="CHEBI:15377"/>
        <dbReference type="ChEBI" id="CHEBI:15636"/>
        <dbReference type="ChEBI" id="CHEBI:33384"/>
        <dbReference type="ChEBI" id="CHEBI:57305"/>
        <dbReference type="ChEBI" id="CHEBI:57453"/>
        <dbReference type="EC" id="2.1.2.1"/>
    </reaction>
</comment>
<comment type="cofactor">
    <cofactor evidence="1">
        <name>pyridoxal 5'-phosphate</name>
        <dbReference type="ChEBI" id="CHEBI:597326"/>
    </cofactor>
</comment>
<comment type="pathway">
    <text evidence="1">One-carbon metabolism; tetrahydrofolate interconversion.</text>
</comment>
<comment type="pathway">
    <text evidence="1">Amino-acid biosynthesis; glycine biosynthesis; glycine from L-serine: step 1/1.</text>
</comment>
<comment type="subunit">
    <text evidence="1">Homodimer.</text>
</comment>
<comment type="subcellular location">
    <subcellularLocation>
        <location evidence="1">Cytoplasm</location>
    </subcellularLocation>
</comment>
<comment type="similarity">
    <text evidence="1">Belongs to the SHMT family.</text>
</comment>
<keyword id="KW-0028">Amino-acid biosynthesis</keyword>
<keyword id="KW-0963">Cytoplasm</keyword>
<keyword id="KW-0554">One-carbon metabolism</keyword>
<keyword id="KW-0663">Pyridoxal phosphate</keyword>
<keyword id="KW-1185">Reference proteome</keyword>
<keyword id="KW-0808">Transferase</keyword>
<proteinExistence type="inferred from homology"/>
<reference key="1">
    <citation type="journal article" date="1997" name="Nature">
        <title>Genomic sequence of a Lyme disease spirochaete, Borrelia burgdorferi.</title>
        <authorList>
            <person name="Fraser C.M."/>
            <person name="Casjens S."/>
            <person name="Huang W.M."/>
            <person name="Sutton G.G."/>
            <person name="Clayton R.A."/>
            <person name="Lathigra R."/>
            <person name="White O."/>
            <person name="Ketchum K.A."/>
            <person name="Dodson R.J."/>
            <person name="Hickey E.K."/>
            <person name="Gwinn M.L."/>
            <person name="Dougherty B.A."/>
            <person name="Tomb J.-F."/>
            <person name="Fleischmann R.D."/>
            <person name="Richardson D.L."/>
            <person name="Peterson J.D."/>
            <person name="Kerlavage A.R."/>
            <person name="Quackenbush J."/>
            <person name="Salzberg S.L."/>
            <person name="Hanson M."/>
            <person name="van Vugt R."/>
            <person name="Palmer N."/>
            <person name="Adams M.D."/>
            <person name="Gocayne J.D."/>
            <person name="Weidman J.F."/>
            <person name="Utterback T.R."/>
            <person name="Watthey L."/>
            <person name="McDonald L.A."/>
            <person name="Artiach P."/>
            <person name="Bowman C."/>
            <person name="Garland S.A."/>
            <person name="Fujii C."/>
            <person name="Cotton M.D."/>
            <person name="Horst K."/>
            <person name="Roberts K.M."/>
            <person name="Hatch B."/>
            <person name="Smith H.O."/>
            <person name="Venter J.C."/>
        </authorList>
    </citation>
    <scope>NUCLEOTIDE SEQUENCE [LARGE SCALE GENOMIC DNA]</scope>
    <source>
        <strain>ATCC 35210 / DSM 4680 / CIP 102532 / B31</strain>
    </source>
</reference>
<name>GLYA_BORBU</name>